<organism>
    <name type="scientific">Sporosarcina pasteurii</name>
    <name type="common">Bacillus pasteurii</name>
    <dbReference type="NCBI Taxonomy" id="1474"/>
    <lineage>
        <taxon>Bacteria</taxon>
        <taxon>Bacillati</taxon>
        <taxon>Bacillota</taxon>
        <taxon>Bacilli</taxon>
        <taxon>Bacillales</taxon>
        <taxon>Caryophanaceae</taxon>
        <taxon>Sporosarcina</taxon>
    </lineage>
</organism>
<reference key="1">
    <citation type="journal article" date="2002" name="J. Biol. Inorg. Chem.">
        <title>Molecular characterization of Bacillus pasteurii UreE, a metal-binding chaperone for the assembly of the urease active site.</title>
        <authorList>
            <person name="Ciurli S."/>
            <person name="Safarov N."/>
            <person name="Miletti S."/>
            <person name="Dikiy A."/>
            <person name="Christensen S.K."/>
            <person name="Kornetzky K."/>
            <person name="Bryant D.A."/>
            <person name="Vandenberghe I."/>
            <person name="Devreese B."/>
            <person name="Samyn B."/>
            <person name="Remaut H."/>
            <person name="Van Beeumen J."/>
        </authorList>
    </citation>
    <scope>NUCLEOTIDE SEQUENCE [GENOMIC DNA]</scope>
    <source>
        <strain>ATCC 11859 / DSM 33 / NCIB 8841 / NCTC 4822</strain>
    </source>
</reference>
<reference key="2">
    <citation type="journal article" date="1995" name="Mol. Cells">
        <title>Genetic organization and nucleotide sequence of the ure gene cluster in Bacillus pasteurii.</title>
        <authorList>
            <person name="You J.-H."/>
            <person name="Kim J.-G."/>
            <person name="Song B.-H."/>
            <person name="Lee M.-H."/>
            <person name="Kim S.-D."/>
        </authorList>
    </citation>
    <scope>NUCLEOTIDE SEQUENCE [GENOMIC DNA] OF 1-210</scope>
    <source>
        <strain>ATCC 11859 / DSM 33 / NCIB 8841 / NCTC 4822</strain>
    </source>
</reference>
<reference key="3">
    <citation type="journal article" date="2005" name="J. Biol. Chem.">
        <title>UreG, a chaperone in the urease assembly process, is an intrinsically unstructured GTPase that specifically binds Zn2+.</title>
        <authorList>
            <person name="Zambelli B."/>
            <person name="Stola M."/>
            <person name="Musiani F."/>
            <person name="De Vriendt K."/>
            <person name="Samyn B."/>
            <person name="Devreese B."/>
            <person name="Van Beeumen J."/>
            <person name="Turano P."/>
            <person name="Dikiy A."/>
            <person name="Bryant D.A."/>
            <person name="Ciurli S."/>
        </authorList>
    </citation>
    <scope>PROTEIN SEQUENCE OF 1-6 AND 209-211</scope>
    <scope>MASS SPECTROMETRY</scope>
    <scope>SUBUNIT</scope>
    <scope>GTPASE ACTIVITY</scope>
    <scope>ZINC AND NICKEL-BINDING</scope>
    <scope>FUNCTION</scope>
    <scope>DOMAIN</scope>
    <scope>MODELING</scope>
    <source>
        <strain>ATCC 11859 / DSM 33 / NCIB 8841 / NCTC 4822</strain>
    </source>
</reference>
<reference key="4">
    <citation type="journal article" date="2006" name="Biochemistry">
        <title>Intrinsically disordered structure of Bacillus pasteurii UreG as revealed by steady-state and time-resolved fluorescence spectroscopy.</title>
        <authorList>
            <person name="Neyroz P."/>
            <person name="Zambelli B."/>
            <person name="Ciurli S."/>
        </authorList>
    </citation>
    <scope>FOLDING STUDIES</scope>
    <scope>DOMAIN</scope>
    <scope>SUBUNIT</scope>
    <scope>DISULFIDE BOND</scope>
    <source>
        <strain>ATCC 11859 / DSM 33 / NCIB 8841 / NCTC 4822</strain>
    </source>
</reference>
<dbReference type="EMBL" id="AF361945">
    <property type="protein sequence ID" value="AAD55060.1"/>
    <property type="molecule type" value="Genomic_DNA"/>
</dbReference>
<dbReference type="EMBL" id="U29368">
    <property type="protein sequence ID" value="AAA73989.1"/>
    <property type="molecule type" value="Genomic_DNA"/>
</dbReference>
<dbReference type="RefSeq" id="WP_115362085.1">
    <property type="nucleotide sequence ID" value="NZ_CP038012.1"/>
</dbReference>
<dbReference type="SMR" id="Q9RP19"/>
<dbReference type="OrthoDB" id="9802035at2"/>
<dbReference type="GO" id="GO:0005737">
    <property type="term" value="C:cytoplasm"/>
    <property type="evidence" value="ECO:0007669"/>
    <property type="project" value="UniProtKB-SubCell"/>
</dbReference>
<dbReference type="GO" id="GO:0005525">
    <property type="term" value="F:GTP binding"/>
    <property type="evidence" value="ECO:0000314"/>
    <property type="project" value="CAFA"/>
</dbReference>
<dbReference type="GO" id="GO:0003924">
    <property type="term" value="F:GTPase activity"/>
    <property type="evidence" value="ECO:0000314"/>
    <property type="project" value="CAFA"/>
</dbReference>
<dbReference type="GO" id="GO:0000287">
    <property type="term" value="F:magnesium ion binding"/>
    <property type="evidence" value="ECO:0000314"/>
    <property type="project" value="CAFA"/>
</dbReference>
<dbReference type="GO" id="GO:0016151">
    <property type="term" value="F:nickel cation binding"/>
    <property type="evidence" value="ECO:0000314"/>
    <property type="project" value="CAFA"/>
</dbReference>
<dbReference type="GO" id="GO:0042803">
    <property type="term" value="F:protein homodimerization activity"/>
    <property type="evidence" value="ECO:0000314"/>
    <property type="project" value="CAFA"/>
</dbReference>
<dbReference type="GO" id="GO:0008270">
    <property type="term" value="F:zinc ion binding"/>
    <property type="evidence" value="ECO:0000314"/>
    <property type="project" value="CAFA"/>
</dbReference>
<dbReference type="GO" id="GO:0043419">
    <property type="term" value="P:urea catabolic process"/>
    <property type="evidence" value="ECO:0007669"/>
    <property type="project" value="InterPro"/>
</dbReference>
<dbReference type="CDD" id="cd05540">
    <property type="entry name" value="UreG"/>
    <property type="match status" value="1"/>
</dbReference>
<dbReference type="FunFam" id="3.40.50.300:FF:000208">
    <property type="entry name" value="Urease accessory protein UreG"/>
    <property type="match status" value="1"/>
</dbReference>
<dbReference type="Gene3D" id="3.40.50.300">
    <property type="entry name" value="P-loop containing nucleotide triphosphate hydrolases"/>
    <property type="match status" value="1"/>
</dbReference>
<dbReference type="HAMAP" id="MF_01389">
    <property type="entry name" value="UreG"/>
    <property type="match status" value="1"/>
</dbReference>
<dbReference type="InterPro" id="IPR003495">
    <property type="entry name" value="CobW/HypB/UreG_nucleotide-bd"/>
</dbReference>
<dbReference type="InterPro" id="IPR027417">
    <property type="entry name" value="P-loop_NTPase"/>
</dbReference>
<dbReference type="InterPro" id="IPR004400">
    <property type="entry name" value="UreG"/>
</dbReference>
<dbReference type="NCBIfam" id="TIGR00101">
    <property type="entry name" value="ureG"/>
    <property type="match status" value="1"/>
</dbReference>
<dbReference type="PANTHER" id="PTHR31715">
    <property type="entry name" value="UREASE ACCESSORY PROTEIN G"/>
    <property type="match status" value="1"/>
</dbReference>
<dbReference type="PANTHER" id="PTHR31715:SF0">
    <property type="entry name" value="UREASE ACCESSORY PROTEIN G"/>
    <property type="match status" value="1"/>
</dbReference>
<dbReference type="Pfam" id="PF02492">
    <property type="entry name" value="cobW"/>
    <property type="match status" value="1"/>
</dbReference>
<dbReference type="PIRSF" id="PIRSF005624">
    <property type="entry name" value="Ni-bind_GTPase"/>
    <property type="match status" value="1"/>
</dbReference>
<dbReference type="SUPFAM" id="SSF52540">
    <property type="entry name" value="P-loop containing nucleoside triphosphate hydrolases"/>
    <property type="match status" value="1"/>
</dbReference>
<name>UREG_SPOPA</name>
<sequence>MKTIHLGIGGPVGSGKTTLVKTLSEALKEEYSIAVITNDIYTREDANFLINENILEKDRIIGVETGGCPHTAIREDASMNFEAIEELKNRFDDLEIILLESGGDNLSATFSPELVDAFIYVIDVSEGGDIPRKGGPGVTRSDFLMVNKTELAPYVGVDLDTMKNDTIKARNGRPFTFANIKTKKGLDEIIAWIKSDLLLEGKTNESASESK</sequence>
<accession>Q9RP19</accession>
<accession>Q45346</accession>
<comment type="function">
    <text evidence="2">Facilitates the functional incorporation of the urease nickel metallocenter. Binds a maximum of 4 Ni(2+) and 2 Zn(2+) ions per homodimer. The affinity for Zn(2+) is 10-fold higher than that for Ni(2+). This process requires GTP hydrolysis.</text>
</comment>
<comment type="subunit">
    <text evidence="2 3">Homodimer; disulfide-linked. The physiological role of the disulfide bond has not been proven in vivo. UreD, UreF and UreG form a complex that acts as a GTP-hydrolysis-dependent molecular chaperone, activating the urease apoprotein by helping to assemble the nickel-containing metallocenter.</text>
</comment>
<comment type="subcellular location">
    <subcellularLocation>
        <location evidence="1">Cytoplasm</location>
    </subcellularLocation>
</comment>
<comment type="domain">
    <text evidence="2 3">Exists in a relatively unstructured form; binding to the other subunits (UreD, UreF and apourease) may induce correct protein folding. The presence of Zn2(+) or GTP does not alter the unfolded state.</text>
</comment>
<comment type="mass spectrometry"/>
<comment type="similarity">
    <text evidence="4">Belongs to the SIMIBI class G3E GTPase family. UreG subfamily.</text>
</comment>
<gene>
    <name type="primary">ureG</name>
</gene>
<protein>
    <recommendedName>
        <fullName>Urease accessory protein UreG</fullName>
    </recommendedName>
</protein>
<feature type="chain" id="PRO_0000347347" description="Urease accessory protein UreG">
    <location>
        <begin position="1"/>
        <end position="211"/>
    </location>
</feature>
<feature type="binding site" evidence="1">
    <location>
        <begin position="10"/>
        <end position="17"/>
    </location>
    <ligand>
        <name>GTP</name>
        <dbReference type="ChEBI" id="CHEBI:37565"/>
    </ligand>
</feature>
<feature type="disulfide bond" description="Interchain" evidence="3">
    <location>
        <position position="68"/>
    </location>
</feature>
<feature type="sequence conflict" description="In Ref. 2; AAA73989." evidence="4" ref="2">
    <location>
        <begin position="100"/>
        <end position="186"/>
    </location>
</feature>
<feature type="sequence conflict" description="In Ref. 2; AAA73989." evidence="4" ref="2">
    <original>ES</original>
    <variation>RV</variation>
    <location>
        <begin position="209"/>
        <end position="210"/>
    </location>
</feature>
<proteinExistence type="evidence at protein level"/>
<evidence type="ECO:0000250" key="1"/>
<evidence type="ECO:0000269" key="2">
    <source>
    </source>
</evidence>
<evidence type="ECO:0000269" key="3">
    <source>
    </source>
</evidence>
<evidence type="ECO:0000305" key="4"/>
<keyword id="KW-0143">Chaperone</keyword>
<keyword id="KW-0963">Cytoplasm</keyword>
<keyword id="KW-0903">Direct protein sequencing</keyword>
<keyword id="KW-1015">Disulfide bond</keyword>
<keyword id="KW-0342">GTP-binding</keyword>
<keyword id="KW-0996">Nickel insertion</keyword>
<keyword id="KW-0547">Nucleotide-binding</keyword>